<comment type="function">
    <text evidence="2 3 4 8 9 10 15">Catalyzes the formation of S-adenosylmethionine (AdoMet) from methionine and ATP. The overall synthetic reaction is composed of two sequential steps, AdoMet formation and the subsequent tripolyphosphate hydrolysis which occurs prior to release of AdoMet from the enzyme (PubMed:10551856, PubMed:10660564, PubMed:6251075, PubMed:7629147, PubMed:7629176, PubMed:9753435). Is essential for growth (PubMed:11952912).</text>
</comment>
<comment type="catalytic activity">
    <reaction evidence="1 2 3 8 9 10 15">
        <text>L-methionine + ATP + H2O = S-adenosyl-L-methionine + phosphate + diphosphate</text>
        <dbReference type="Rhea" id="RHEA:21080"/>
        <dbReference type="ChEBI" id="CHEBI:15377"/>
        <dbReference type="ChEBI" id="CHEBI:30616"/>
        <dbReference type="ChEBI" id="CHEBI:33019"/>
        <dbReference type="ChEBI" id="CHEBI:43474"/>
        <dbReference type="ChEBI" id="CHEBI:57844"/>
        <dbReference type="ChEBI" id="CHEBI:59789"/>
        <dbReference type="EC" id="2.5.1.6"/>
    </reaction>
</comment>
<comment type="cofactor">
    <cofactor evidence="1 2 5 8 12 13">
        <name>Mg(2+)</name>
        <dbReference type="ChEBI" id="CHEBI:18420"/>
    </cofactor>
    <cofactor evidence="8">
        <name>Mn(2+)</name>
        <dbReference type="ChEBI" id="CHEBI:29035"/>
    </cofactor>
    <cofactor evidence="8">
        <name>Co(2+)</name>
        <dbReference type="ChEBI" id="CHEBI:48828"/>
    </cofactor>
    <text evidence="5 12 13 17 21 22">Binds 2 divalent ions per subunit. The ions interact primarily with the substrate.</text>
</comment>
<comment type="cofactor">
    <cofactor evidence="1 5 8 9 12 13">
        <name>K(+)</name>
        <dbReference type="ChEBI" id="CHEBI:29103"/>
    </cofactor>
    <text evidence="5 9 12 13 21 22">Binds 1 potassium ion per subunit. The potassium ion interacts primarily with the substrate.</text>
</comment>
<comment type="biophysicochemical properties">
    <kinetics>
        <KM evidence="9">3 mM for Mg(2+)</KM>
        <KM evidence="9">0.11 mM for ATP</KM>
        <KM evidence="9">0.08 mM for L-methionine</KM>
    </kinetics>
</comment>
<comment type="pathway">
    <text evidence="1 2 3 8 9 10 15">Amino-acid biosynthesis; S-adenosyl-L-methionine biosynthesis; S-adenosyl-L-methionine from L-methionine: step 1/1.</text>
</comment>
<comment type="subunit">
    <text evidence="3 5 8 10 12 13 14">Homotetramer; dimer of dimers (PubMed:10660564, PubMed:14967023, PubMed:6251075, PubMed:7629147, PubMed:7629176, PubMed:8550549, PubMed:8611562, PubMed:8723769). The active sites are at the interface between subunits; each dimer has two active sites (PubMed:14967023, PubMed:8550549, PubMed:8611562, PubMed:8723769).</text>
</comment>
<comment type="subunit">
    <text evidence="7">(Microbial infection) Interacts with enterobacteria phage T3 S-Adenosylmethionine lyase; this interaction induces the polymerization of METK into filaments that are enzymatically inactive.</text>
</comment>
<comment type="interaction">
    <interactant intactId="EBI-546295">
        <id>P0A817</id>
    </interactant>
    <interactant intactId="EBI-543750">
        <id>P0A6F5</id>
        <label>groEL</label>
    </interactant>
    <organismsDiffer>false</organismsDiffer>
    <experiments>2</experiments>
</comment>
<comment type="interaction">
    <interactant intactId="EBI-546295">
        <id>P0A817</id>
    </interactant>
    <interactant intactId="EBI-546295">
        <id>P0A817</id>
        <label>metK</label>
    </interactant>
    <organismsDiffer>false</organismsDiffer>
    <experiments>2</experiments>
</comment>
<comment type="subcellular location">
    <subcellularLocation>
        <location evidence="1">Cytoplasm</location>
    </subcellularLocation>
</comment>
<comment type="induction">
    <text>AdoMet activates the tripolyphosphatase reaction.</text>
</comment>
<comment type="mass spectrometry" mass="41843.0" error="10.5" method="Electrospray" evidence="12"/>
<comment type="disruption phenotype">
    <text evidence="11">Cells are resistant to methionine-analogs, such as DL-ethionine(Et).</text>
</comment>
<comment type="similarity">
    <text evidence="1">Belongs to the AdoMet synthase family.</text>
</comment>
<comment type="caution">
    <text evidence="19">Was originally thought to differ from MetX, which was assigned as a second AdoMet synthase before being shown to be identical to MetK.</text>
</comment>
<accession>P0A817</accession>
<accession>P04384</accession>
<accession>P30869</accession>
<accession>Q2M9Q1</accession>
<protein>
    <recommendedName>
        <fullName evidence="1">S-adenosylmethionine synthase</fullName>
        <shortName evidence="1">AdoMet synthase</shortName>
        <ecNumber evidence="1 2 3 8 9 10 15">2.5.1.6</ecNumber>
    </recommendedName>
    <alternativeName>
        <fullName evidence="1">MAT</fullName>
    </alternativeName>
    <alternativeName>
        <fullName evidence="1">Methionine adenosyltransferase</fullName>
    </alternativeName>
</protein>
<organism>
    <name type="scientific">Escherichia coli (strain K12)</name>
    <dbReference type="NCBI Taxonomy" id="83333"/>
    <lineage>
        <taxon>Bacteria</taxon>
        <taxon>Pseudomonadati</taxon>
        <taxon>Pseudomonadota</taxon>
        <taxon>Gammaproteobacteria</taxon>
        <taxon>Enterobacterales</taxon>
        <taxon>Enterobacteriaceae</taxon>
        <taxon>Escherichia</taxon>
    </lineage>
</organism>
<dbReference type="EC" id="2.5.1.6" evidence="1 2 3 8 9 10 15"/>
<dbReference type="EMBL" id="K02129">
    <property type="protein sequence ID" value="AAA24164.1"/>
    <property type="molecule type" value="Genomic_DNA"/>
</dbReference>
<dbReference type="EMBL" id="U28377">
    <property type="protein sequence ID" value="AAA69109.1"/>
    <property type="molecule type" value="Genomic_DNA"/>
</dbReference>
<dbReference type="EMBL" id="U00096">
    <property type="protein sequence ID" value="AAC75979.1"/>
    <property type="molecule type" value="Genomic_DNA"/>
</dbReference>
<dbReference type="EMBL" id="AP009048">
    <property type="protein sequence ID" value="BAE77005.1"/>
    <property type="molecule type" value="Genomic_DNA"/>
</dbReference>
<dbReference type="EMBL" id="M98266">
    <property type="protein sequence ID" value="AAB05197.1"/>
    <property type="molecule type" value="Genomic_DNA"/>
</dbReference>
<dbReference type="EMBL" id="M31770">
    <property type="protein sequence ID" value="AAA24645.2"/>
    <property type="molecule type" value="Genomic_DNA"/>
</dbReference>
<dbReference type="PIR" id="E65079">
    <property type="entry name" value="SYECSM"/>
</dbReference>
<dbReference type="RefSeq" id="NP_417417.1">
    <property type="nucleotide sequence ID" value="NC_000913.3"/>
</dbReference>
<dbReference type="RefSeq" id="WP_001062128.1">
    <property type="nucleotide sequence ID" value="NZ_STEB01000001.1"/>
</dbReference>
<dbReference type="PDB" id="1FUG">
    <property type="method" value="X-ray"/>
    <property type="resolution" value="3.20 A"/>
    <property type="chains" value="A/B=2-384"/>
</dbReference>
<dbReference type="PDB" id="1MXA">
    <property type="method" value="X-ray"/>
    <property type="resolution" value="2.80 A"/>
    <property type="chains" value="A=2-384"/>
</dbReference>
<dbReference type="PDB" id="1MXB">
    <property type="method" value="X-ray"/>
    <property type="resolution" value="2.80 A"/>
    <property type="chains" value="A=2-384"/>
</dbReference>
<dbReference type="PDB" id="1MXC">
    <property type="method" value="X-ray"/>
    <property type="resolution" value="3.00 A"/>
    <property type="chains" value="A=2-384"/>
</dbReference>
<dbReference type="PDB" id="1P7L">
    <property type="method" value="X-ray"/>
    <property type="resolution" value="2.50 A"/>
    <property type="chains" value="A/B/C/D=2-384"/>
</dbReference>
<dbReference type="PDB" id="1RG9">
    <property type="method" value="X-ray"/>
    <property type="resolution" value="2.50 A"/>
    <property type="chains" value="A/B/C/D=2-384"/>
</dbReference>
<dbReference type="PDB" id="1XRA">
    <property type="method" value="X-ray"/>
    <property type="resolution" value="3.00 A"/>
    <property type="chains" value="A=2-384"/>
</dbReference>
<dbReference type="PDB" id="1XRB">
    <property type="method" value="X-ray"/>
    <property type="resolution" value="3.00 A"/>
    <property type="chains" value="A=2-384"/>
</dbReference>
<dbReference type="PDB" id="1XRC">
    <property type="method" value="X-ray"/>
    <property type="resolution" value="3.00 A"/>
    <property type="chains" value="A=2-384"/>
</dbReference>
<dbReference type="PDB" id="7OCK">
    <property type="method" value="EM"/>
    <property type="resolution" value="3.60 A"/>
    <property type="chains" value="B/C/D/E/F/G/H/I=1-384"/>
</dbReference>
<dbReference type="PDB" id="7R2W">
    <property type="method" value="X-ray"/>
    <property type="resolution" value="1.60 A"/>
    <property type="chains" value="A=1-384"/>
</dbReference>
<dbReference type="PDB" id="8BB1">
    <property type="method" value="EM"/>
    <property type="resolution" value="2.80 A"/>
    <property type="chains" value="A/B/C/D=1-384"/>
</dbReference>
<dbReference type="PDB" id="8P4O">
    <property type="method" value="EM"/>
    <property type="resolution" value="3.04 A"/>
    <property type="chains" value="1=1-384"/>
</dbReference>
<dbReference type="PDBsum" id="1FUG"/>
<dbReference type="PDBsum" id="1MXA"/>
<dbReference type="PDBsum" id="1MXB"/>
<dbReference type="PDBsum" id="1MXC"/>
<dbReference type="PDBsum" id="1P7L"/>
<dbReference type="PDBsum" id="1RG9"/>
<dbReference type="PDBsum" id="1XRA"/>
<dbReference type="PDBsum" id="1XRB"/>
<dbReference type="PDBsum" id="1XRC"/>
<dbReference type="PDBsum" id="7OCK"/>
<dbReference type="PDBsum" id="7R2W"/>
<dbReference type="PDBsum" id="8BB1"/>
<dbReference type="PDBsum" id="8P4O"/>
<dbReference type="EMDB" id="EMD-15952"/>
<dbReference type="EMDB" id="EMD-15953"/>
<dbReference type="EMDB" id="EMD-17421"/>
<dbReference type="EMDB" id="EMD-17422"/>
<dbReference type="EMDB" id="EMD-17423"/>
<dbReference type="EMDB" id="EMD-17424"/>
<dbReference type="EMDB" id="EMD-17563"/>
<dbReference type="EMDB" id="EMD-17564"/>
<dbReference type="EMDB" id="EMD-17565"/>
<dbReference type="EMDB" id="EMD-17566"/>
<dbReference type="EMDB" id="EMD-17567"/>
<dbReference type="EMDB" id="EMD-17568"/>
<dbReference type="EMDB" id="EMD-17569"/>
<dbReference type="EMDB" id="EMD-17570"/>
<dbReference type="EMDB" id="EMD-17571"/>
<dbReference type="EMDB" id="EMD-17572"/>
<dbReference type="EMDB" id="EMD-17573"/>
<dbReference type="SASBDB" id="P0A817"/>
<dbReference type="SMR" id="P0A817"/>
<dbReference type="BioGRID" id="4260657">
    <property type="interactions" value="266"/>
</dbReference>
<dbReference type="DIP" id="DIP-35672N"/>
<dbReference type="FunCoup" id="P0A817">
    <property type="interactions" value="922"/>
</dbReference>
<dbReference type="IntAct" id="P0A817">
    <property type="interactions" value="39"/>
</dbReference>
<dbReference type="MINT" id="P0A817"/>
<dbReference type="STRING" id="511145.b2942"/>
<dbReference type="iPTMnet" id="P0A817"/>
<dbReference type="jPOST" id="P0A817"/>
<dbReference type="PaxDb" id="511145-b2942"/>
<dbReference type="EnsemblBacteria" id="AAC75979">
    <property type="protein sequence ID" value="AAC75979"/>
    <property type="gene ID" value="b2942"/>
</dbReference>
<dbReference type="GeneID" id="93779055"/>
<dbReference type="GeneID" id="945389"/>
<dbReference type="KEGG" id="ecj:JW2909"/>
<dbReference type="KEGG" id="eco:b2942"/>
<dbReference type="KEGG" id="ecoc:C3026_16105"/>
<dbReference type="PATRIC" id="fig|1411691.4.peg.3791"/>
<dbReference type="EchoBASE" id="EB0584"/>
<dbReference type="eggNOG" id="COG0192">
    <property type="taxonomic scope" value="Bacteria"/>
</dbReference>
<dbReference type="HOGENOM" id="CLU_041802_1_1_6"/>
<dbReference type="InParanoid" id="P0A817"/>
<dbReference type="OMA" id="ASYMARY"/>
<dbReference type="OrthoDB" id="9801686at2"/>
<dbReference type="PhylomeDB" id="P0A817"/>
<dbReference type="BioCyc" id="EcoCyc:S-ADENMETSYN-MONOMER"/>
<dbReference type="BioCyc" id="MetaCyc:S-ADENMETSYN-MONOMER"/>
<dbReference type="BRENDA" id="2.5.1.6">
    <property type="organism ID" value="2026"/>
</dbReference>
<dbReference type="SABIO-RK" id="P0A817"/>
<dbReference type="UniPathway" id="UPA00315">
    <property type="reaction ID" value="UER00080"/>
</dbReference>
<dbReference type="EvolutionaryTrace" id="P0A817"/>
<dbReference type="PRO" id="PR:P0A817"/>
<dbReference type="Proteomes" id="UP000000625">
    <property type="component" value="Chromosome"/>
</dbReference>
<dbReference type="GO" id="GO:0005829">
    <property type="term" value="C:cytosol"/>
    <property type="evidence" value="ECO:0000314"/>
    <property type="project" value="EcoCyc"/>
</dbReference>
<dbReference type="GO" id="GO:0005524">
    <property type="term" value="F:ATP binding"/>
    <property type="evidence" value="ECO:0007669"/>
    <property type="project" value="UniProtKB-UniRule"/>
</dbReference>
<dbReference type="GO" id="GO:0042802">
    <property type="term" value="F:identical protein binding"/>
    <property type="evidence" value="ECO:0000353"/>
    <property type="project" value="IntAct"/>
</dbReference>
<dbReference type="GO" id="GO:0000287">
    <property type="term" value="F:magnesium ion binding"/>
    <property type="evidence" value="ECO:0000314"/>
    <property type="project" value="EcoCyc"/>
</dbReference>
<dbReference type="GO" id="GO:0004478">
    <property type="term" value="F:methionine adenosyltransferase activity"/>
    <property type="evidence" value="ECO:0000314"/>
    <property type="project" value="EcoCyc"/>
</dbReference>
<dbReference type="GO" id="GO:0030955">
    <property type="term" value="F:potassium ion binding"/>
    <property type="evidence" value="ECO:0000314"/>
    <property type="project" value="EcoCyc"/>
</dbReference>
<dbReference type="GO" id="GO:0006730">
    <property type="term" value="P:one-carbon metabolic process"/>
    <property type="evidence" value="ECO:0007669"/>
    <property type="project" value="UniProtKB-KW"/>
</dbReference>
<dbReference type="GO" id="GO:0006556">
    <property type="term" value="P:S-adenosylmethionine biosynthetic process"/>
    <property type="evidence" value="ECO:0000315"/>
    <property type="project" value="EcoCyc"/>
</dbReference>
<dbReference type="GO" id="GO:0033353">
    <property type="term" value="P:S-adenosylmethionine cycle"/>
    <property type="evidence" value="ECO:0000315"/>
    <property type="project" value="GO_Central"/>
</dbReference>
<dbReference type="CDD" id="cd18079">
    <property type="entry name" value="S-AdoMet_synt"/>
    <property type="match status" value="1"/>
</dbReference>
<dbReference type="FunFam" id="3.30.300.10:FF:000001">
    <property type="entry name" value="S-adenosylmethionine synthase"/>
    <property type="match status" value="1"/>
</dbReference>
<dbReference type="FunFam" id="3.30.300.10:FF:000003">
    <property type="entry name" value="S-adenosylmethionine synthase"/>
    <property type="match status" value="1"/>
</dbReference>
<dbReference type="Gene3D" id="3.30.300.10">
    <property type="match status" value="3"/>
</dbReference>
<dbReference type="HAMAP" id="MF_00086">
    <property type="entry name" value="S_AdoMet_synth1"/>
    <property type="match status" value="1"/>
</dbReference>
<dbReference type="InterPro" id="IPR022631">
    <property type="entry name" value="ADOMET_SYNTHASE_CS"/>
</dbReference>
<dbReference type="InterPro" id="IPR022630">
    <property type="entry name" value="S-AdoMet_synt_C"/>
</dbReference>
<dbReference type="InterPro" id="IPR022629">
    <property type="entry name" value="S-AdoMet_synt_central"/>
</dbReference>
<dbReference type="InterPro" id="IPR022628">
    <property type="entry name" value="S-AdoMet_synt_N"/>
</dbReference>
<dbReference type="InterPro" id="IPR002133">
    <property type="entry name" value="S-AdoMet_synthetase"/>
</dbReference>
<dbReference type="InterPro" id="IPR022636">
    <property type="entry name" value="S-AdoMet_synthetase_sfam"/>
</dbReference>
<dbReference type="NCBIfam" id="TIGR01034">
    <property type="entry name" value="metK"/>
    <property type="match status" value="1"/>
</dbReference>
<dbReference type="PANTHER" id="PTHR11964">
    <property type="entry name" value="S-ADENOSYLMETHIONINE SYNTHETASE"/>
    <property type="match status" value="1"/>
</dbReference>
<dbReference type="Pfam" id="PF02773">
    <property type="entry name" value="S-AdoMet_synt_C"/>
    <property type="match status" value="1"/>
</dbReference>
<dbReference type="Pfam" id="PF02772">
    <property type="entry name" value="S-AdoMet_synt_M"/>
    <property type="match status" value="1"/>
</dbReference>
<dbReference type="Pfam" id="PF00438">
    <property type="entry name" value="S-AdoMet_synt_N"/>
    <property type="match status" value="1"/>
</dbReference>
<dbReference type="PIRSF" id="PIRSF000497">
    <property type="entry name" value="MAT"/>
    <property type="match status" value="1"/>
</dbReference>
<dbReference type="SUPFAM" id="SSF55973">
    <property type="entry name" value="S-adenosylmethionine synthetase"/>
    <property type="match status" value="3"/>
</dbReference>
<dbReference type="PROSITE" id="PS00376">
    <property type="entry name" value="ADOMET_SYNTHASE_1"/>
    <property type="match status" value="1"/>
</dbReference>
<dbReference type="PROSITE" id="PS00377">
    <property type="entry name" value="ADOMET_SYNTHASE_2"/>
    <property type="match status" value="1"/>
</dbReference>
<proteinExistence type="evidence at protein level"/>
<keyword id="KW-0002">3D-structure</keyword>
<keyword id="KW-0007">Acetylation</keyword>
<keyword id="KW-0067">ATP-binding</keyword>
<keyword id="KW-0170">Cobalt</keyword>
<keyword id="KW-0963">Cytoplasm</keyword>
<keyword id="KW-0945">Host-virus interaction</keyword>
<keyword id="KW-0460">Magnesium</keyword>
<keyword id="KW-0464">Manganese</keyword>
<keyword id="KW-0479">Metal-binding</keyword>
<keyword id="KW-0547">Nucleotide-binding</keyword>
<keyword id="KW-0554">One-carbon metabolism</keyword>
<keyword id="KW-0630">Potassium</keyword>
<keyword id="KW-1185">Reference proteome</keyword>
<keyword id="KW-0808">Transferase</keyword>
<sequence length="384" mass="41952">MAKHLFTSESVSEGHPDKIADQISDAVLDAILEQDPKARVACETYVKTGMVLVGGEITTSAWVDIEEITRNTVREIGYVHSDMGFDANSCAVLSAIGKQSPDINQGVDRADPLEQGAGDQGLMFGYATNETDVLMPAPITYAHRLVQRQAEVRKNGTLPWLRPDAKSQVTFQYDDGKIVGIDAVVLSTQHSEEIDQKSLQEAVMEEIIKPILPAEWLTSATKFFINPTGRFVIGGPMGDCGLTGRKIIVDTYGGMARHGGGAFSGKDPSKVDRSAAYAARYVAKNIVAAGLADRCEIQVSYAIGVAEPTSIMVETFGTEKVPSEQLTLLVREFFDLRPYGLIQMLDLLHPIYKETAAYGHFGREHFPWEKTDKAQLLRDAAGLK</sequence>
<name>METK_ECOLI</name>
<feature type="initiator methionine" description="Removed">
    <location>
        <position position="1"/>
    </location>
</feature>
<feature type="chain" id="PRO_0000174518" description="S-adenosylmethionine synthase">
    <location>
        <begin position="2"/>
        <end position="384"/>
    </location>
</feature>
<feature type="region of interest" description="Flexible loop" evidence="1 5">
    <location>
        <begin position="99"/>
        <end position="109"/>
    </location>
</feature>
<feature type="binding site" description="in other chain" evidence="1 5 21 22">
    <location>
        <position position="15"/>
    </location>
    <ligand>
        <name>ATP</name>
        <dbReference type="ChEBI" id="CHEBI:30616"/>
        <note>ligand shared between two neighboring subunits</note>
    </ligand>
</feature>
<feature type="binding site" evidence="1 5 21 22">
    <location>
        <position position="17"/>
    </location>
    <ligand>
        <name>Mg(2+)</name>
        <dbReference type="ChEBI" id="CHEBI:18420"/>
    </ligand>
</feature>
<feature type="binding site" evidence="1 5 18 20 21 22">
    <location>
        <position position="43"/>
    </location>
    <ligand>
        <name>K(+)</name>
        <dbReference type="ChEBI" id="CHEBI:29103"/>
    </ligand>
</feature>
<feature type="binding site" description="in other chain" evidence="1 5 21 22">
    <location>
        <position position="56"/>
    </location>
    <ligand>
        <name>L-methionine</name>
        <dbReference type="ChEBI" id="CHEBI:57844"/>
        <note>ligand shared between two neighboring subunits</note>
    </ligand>
</feature>
<feature type="binding site" description="in other chain" evidence="1 5 21 22">
    <location>
        <position position="99"/>
    </location>
    <ligand>
        <name>L-methionine</name>
        <dbReference type="ChEBI" id="CHEBI:57844"/>
        <note>ligand shared between two neighboring subunits</note>
    </ligand>
</feature>
<feature type="binding site" description="in other chain" evidence="1 5 21 22">
    <location>
        <begin position="164"/>
        <end position="166"/>
    </location>
    <ligand>
        <name>ATP</name>
        <dbReference type="ChEBI" id="CHEBI:30616"/>
        <note>ligand shared between two neighboring subunits</note>
    </ligand>
</feature>
<feature type="binding site" description="in other chain" evidence="1 5 21 22">
    <location>
        <begin position="230"/>
        <end position="231"/>
    </location>
    <ligand>
        <name>ATP</name>
        <dbReference type="ChEBI" id="CHEBI:30616"/>
        <note>ligand shared between two neighboring subunits</note>
    </ligand>
</feature>
<feature type="binding site" evidence="1 5 22">
    <location>
        <position position="239"/>
    </location>
    <ligand>
        <name>ATP</name>
        <dbReference type="ChEBI" id="CHEBI:30616"/>
        <note>ligand shared between two neighboring subunits</note>
    </ligand>
</feature>
<feature type="binding site" evidence="1 5 21">
    <location>
        <position position="239"/>
    </location>
    <ligand>
        <name>L-methionine</name>
        <dbReference type="ChEBI" id="CHEBI:57844"/>
        <note>ligand shared between two neighboring subunits</note>
    </ligand>
</feature>
<feature type="binding site" description="in other chain" evidence="1 5 21 22">
    <location>
        <begin position="245"/>
        <end position="246"/>
    </location>
    <ligand>
        <name>ATP</name>
        <dbReference type="ChEBI" id="CHEBI:30616"/>
        <note>ligand shared between two neighboring subunits</note>
    </ligand>
</feature>
<feature type="binding site" evidence="1 5 21 22">
    <location>
        <position position="262"/>
    </location>
    <ligand>
        <name>ATP</name>
        <dbReference type="ChEBI" id="CHEBI:30616"/>
        <note>ligand shared between two neighboring subunits</note>
    </ligand>
</feature>
<feature type="binding site" evidence="1 5 21 22">
    <location>
        <position position="266"/>
    </location>
    <ligand>
        <name>ATP</name>
        <dbReference type="ChEBI" id="CHEBI:30616"/>
        <note>ligand shared between two neighboring subunits</note>
    </ligand>
</feature>
<feature type="binding site" description="in other chain" evidence="1 5 21 22">
    <location>
        <position position="270"/>
    </location>
    <ligand>
        <name>L-methionine</name>
        <dbReference type="ChEBI" id="CHEBI:57844"/>
        <note>ligand shared between two neighboring subunits</note>
    </ligand>
</feature>
<feature type="modified residue" description="N6-acetyllysine" evidence="6">
    <location>
        <position position="3"/>
    </location>
</feature>
<feature type="mutagenesis site" description="Loss of activity." evidence="3">
    <original>H</original>
    <variation>N</variation>
    <location>
        <position position="15"/>
    </location>
</feature>
<feature type="mutagenesis site" description="Loss of activity." evidence="2">
    <original>D</original>
    <variation>N</variation>
    <variation>A</variation>
    <location>
        <position position="17"/>
    </location>
</feature>
<feature type="mutagenesis site" description="Misfolding and subject to proteolytic degradation." evidence="9">
    <original>E</original>
    <variation>K</variation>
    <location>
        <position position="43"/>
    </location>
</feature>
<feature type="mutagenesis site" description="Nearly abolishes enzyme activity. Abolishes stimulation of enzyme activity by potassium." evidence="9">
    <original>E</original>
    <variation>Q</variation>
    <location>
        <position position="43"/>
    </location>
</feature>
<feature type="mutagenesis site" description="Decrease in the homotetramer formation capability. Enhanced thermal stability." evidence="10">
    <original>C</original>
    <variation>A</variation>
    <variation>S</variation>
    <location>
        <position position="90"/>
    </location>
</feature>
<feature type="mutagenesis site" description="Decrease of both AdoMet synthesis and AdoMet-activated tripolyphosphate hydrolysis." evidence="2">
    <original>D</original>
    <variation>N</variation>
    <location>
        <position position="119"/>
    </location>
</feature>
<feature type="mutagenesis site" description="Decrease in AdoMet synthesis." evidence="3">
    <original>K</original>
    <variation>M</variation>
    <location>
        <position position="166"/>
    </location>
</feature>
<feature type="mutagenesis site" description="Decrease in AdoMet synthesis." evidence="2">
    <original>D</original>
    <variation>N</variation>
    <location>
        <position position="239"/>
    </location>
</feature>
<feature type="mutagenesis site" description="Decrease in AdoMet synthesis." evidence="10">
    <original>C</original>
    <variation>A</variation>
    <location>
        <position position="240"/>
    </location>
</feature>
<feature type="mutagenesis site" description="Loss of activity." evidence="15">
    <original>R</original>
    <variation>H</variation>
    <variation>L</variation>
    <location>
        <position position="245"/>
    </location>
</feature>
<feature type="mutagenesis site" description="Loss of activity. Modification in protein conformation." evidence="3">
    <original>K</original>
    <variation>M</variation>
    <location>
        <position position="246"/>
    </location>
</feature>
<feature type="mutagenesis site" description="Loss of activity." evidence="3">
    <original>K</original>
    <variation>A</variation>
    <location>
        <position position="266"/>
    </location>
</feature>
<feature type="mutagenesis site" description="Unstable; trace activity." evidence="3">
    <original>K</original>
    <variation>M</variation>
    <location>
        <position position="266"/>
    </location>
</feature>
<feature type="mutagenesis site" description="Decrease in activity." evidence="3">
    <original>K</original>
    <variation>M</variation>
    <location>
        <position position="270"/>
    </location>
</feature>
<feature type="mutagenesis site" description="Loss of activity." evidence="2">
    <original>D</original>
    <variation>N</variation>
    <variation>A</variation>
    <location>
        <position position="272"/>
    </location>
</feature>
<feature type="sequence conflict" description="In Ref. 1 and 5." evidence="16" ref="1 5">
    <original>MVLVGGEITTSA</original>
    <variation>IGFSWRRNHHQRP</variation>
    <location>
        <begin position="50"/>
        <end position="61"/>
    </location>
</feature>
<feature type="sequence conflict" description="In Ref. 1; AAA24164." evidence="16" ref="1">
    <original>MFGYATNETDV</original>
    <variation>DVSATQLMKPTC</variation>
    <location>
        <begin position="123"/>
        <end position="133"/>
    </location>
</feature>
<feature type="sequence conflict" description="In Ref. 1 and 2." evidence="16" ref="1 2">
    <original>PWL</original>
    <variation>RV</variation>
    <location>
        <begin position="159"/>
        <end position="161"/>
    </location>
</feature>
<feature type="sequence conflict" description="In Ref. 1; AAA24164." evidence="16" ref="1">
    <original>Q</original>
    <variation>S</variation>
    <location>
        <position position="172"/>
    </location>
</feature>
<feature type="sequence conflict" description="In Ref. 1; AAA24164." evidence="16" ref="1">
    <original>Y</original>
    <variation>T</variation>
    <location>
        <position position="252"/>
    </location>
</feature>
<feature type="sequence conflict" description="In Ref. 1; AAA24164." evidence="16" ref="1">
    <original>V</original>
    <variation>L</variation>
    <location>
        <position position="305"/>
    </location>
</feature>
<feature type="sequence conflict" description="In Ref. 1." evidence="16" ref="1">
    <location>
        <position position="337"/>
    </location>
</feature>
<feature type="sequence conflict" description="In Ref. 1." evidence="16" ref="1">
    <original>Y</original>
    <variation>I</variation>
    <location>
        <position position="339"/>
    </location>
</feature>
<feature type="sequence conflict" description="In Ref. 2." evidence="16" ref="2">
    <original>QL</original>
    <variation>HV</variation>
    <location>
        <begin position="375"/>
        <end position="376"/>
    </location>
</feature>
<feature type="sequence conflict" description="In Ref. 2." evidence="16" ref="2">
    <original>R</original>
    <variation>P</variation>
    <location>
        <position position="378"/>
    </location>
</feature>
<feature type="strand" evidence="26">
    <location>
        <begin position="4"/>
        <end position="11"/>
    </location>
</feature>
<feature type="helix" evidence="26">
    <location>
        <begin position="16"/>
        <end position="34"/>
    </location>
</feature>
<feature type="strand" evidence="26">
    <location>
        <begin position="39"/>
        <end position="47"/>
    </location>
</feature>
<feature type="strand" evidence="26">
    <location>
        <begin position="50"/>
        <end position="58"/>
    </location>
</feature>
<feature type="helix" evidence="26">
    <location>
        <begin position="65"/>
        <end position="76"/>
    </location>
</feature>
<feature type="helix" evidence="26">
    <location>
        <begin position="81"/>
        <end position="83"/>
    </location>
</feature>
<feature type="turn" evidence="26">
    <location>
        <begin position="87"/>
        <end position="89"/>
    </location>
</feature>
<feature type="strand" evidence="26">
    <location>
        <begin position="90"/>
        <end position="97"/>
    </location>
</feature>
<feature type="helix" evidence="25">
    <location>
        <begin position="101"/>
        <end position="107"/>
    </location>
</feature>
<feature type="helix" evidence="26">
    <location>
        <begin position="112"/>
        <end position="114"/>
    </location>
</feature>
<feature type="strand" evidence="26">
    <location>
        <begin position="117"/>
        <end position="119"/>
    </location>
</feature>
<feature type="strand" evidence="26">
    <location>
        <begin position="121"/>
        <end position="128"/>
    </location>
</feature>
<feature type="helix" evidence="26">
    <location>
        <begin position="137"/>
        <end position="154"/>
    </location>
</feature>
<feature type="strand" evidence="24">
    <location>
        <begin position="156"/>
        <end position="158"/>
    </location>
</feature>
<feature type="strand" evidence="26">
    <location>
        <begin position="161"/>
        <end position="174"/>
    </location>
</feature>
<feature type="strand" evidence="26">
    <location>
        <begin position="177"/>
        <end position="190"/>
    </location>
</feature>
<feature type="strand" evidence="24">
    <location>
        <begin position="192"/>
        <end position="194"/>
    </location>
</feature>
<feature type="helix" evidence="26">
    <location>
        <begin position="196"/>
        <end position="206"/>
    </location>
</feature>
<feature type="turn" evidence="26">
    <location>
        <begin position="207"/>
        <end position="211"/>
    </location>
</feature>
<feature type="helix" evidence="26">
    <location>
        <begin position="214"/>
        <end position="216"/>
    </location>
</feature>
<feature type="strand" evidence="26">
    <location>
        <begin position="222"/>
        <end position="226"/>
    </location>
</feature>
<feature type="strand" evidence="27">
    <location>
        <begin position="227"/>
        <end position="229"/>
    </location>
</feature>
<feature type="helix" evidence="26">
    <location>
        <begin position="235"/>
        <end position="237"/>
    </location>
</feature>
<feature type="strand" evidence="24">
    <location>
        <begin position="239"/>
        <end position="242"/>
    </location>
</feature>
<feature type="turn" evidence="26">
    <location>
        <begin position="247"/>
        <end position="254"/>
    </location>
</feature>
<feature type="helix" evidence="26">
    <location>
        <begin position="271"/>
        <end position="288"/>
    </location>
</feature>
<feature type="turn" evidence="23">
    <location>
        <begin position="289"/>
        <end position="291"/>
    </location>
</feature>
<feature type="strand" evidence="26">
    <location>
        <begin position="293"/>
        <end position="301"/>
    </location>
</feature>
<feature type="strand" evidence="27">
    <location>
        <begin position="305"/>
        <end position="307"/>
    </location>
</feature>
<feature type="strand" evidence="26">
    <location>
        <begin position="309"/>
        <end position="314"/>
    </location>
</feature>
<feature type="strand" evidence="25">
    <location>
        <begin position="319"/>
        <end position="321"/>
    </location>
</feature>
<feature type="helix" evidence="26">
    <location>
        <begin position="323"/>
        <end position="333"/>
    </location>
</feature>
<feature type="helix" evidence="26">
    <location>
        <begin position="338"/>
        <end position="345"/>
    </location>
</feature>
<feature type="strand" evidence="23">
    <location>
        <begin position="348"/>
        <end position="350"/>
    </location>
</feature>
<feature type="helix" evidence="26">
    <location>
        <begin position="353"/>
        <end position="356"/>
    </location>
</feature>
<feature type="strand" evidence="26">
    <location>
        <begin position="360"/>
        <end position="362"/>
    </location>
</feature>
<feature type="strand" evidence="24">
    <location>
        <begin position="364"/>
        <end position="366"/>
    </location>
</feature>
<feature type="helix" evidence="26">
    <location>
        <begin position="367"/>
        <end position="369"/>
    </location>
</feature>
<feature type="helix" evidence="26">
    <location>
        <begin position="374"/>
        <end position="380"/>
    </location>
</feature>
<evidence type="ECO:0000255" key="1">
    <source>
        <dbReference type="HAMAP-Rule" id="MF_00086"/>
    </source>
</evidence>
<evidence type="ECO:0000269" key="2">
    <source>
    </source>
</evidence>
<evidence type="ECO:0000269" key="3">
    <source>
    </source>
</evidence>
<evidence type="ECO:0000269" key="4">
    <source>
    </source>
</evidence>
<evidence type="ECO:0000269" key="5">
    <source>
    </source>
</evidence>
<evidence type="ECO:0000269" key="6">
    <source>
    </source>
</evidence>
<evidence type="ECO:0000269" key="7">
    <source>
    </source>
</evidence>
<evidence type="ECO:0000269" key="8">
    <source>
    </source>
</evidence>
<evidence type="ECO:0000269" key="9">
    <source>
    </source>
</evidence>
<evidence type="ECO:0000269" key="10">
    <source>
    </source>
</evidence>
<evidence type="ECO:0000269" key="11">
    <source>
    </source>
</evidence>
<evidence type="ECO:0000269" key="12">
    <source>
    </source>
</evidence>
<evidence type="ECO:0000269" key="13">
    <source>
    </source>
</evidence>
<evidence type="ECO:0000269" key="14">
    <source>
    </source>
</evidence>
<evidence type="ECO:0000269" key="15">
    <source>
    </source>
</evidence>
<evidence type="ECO:0000305" key="16"/>
<evidence type="ECO:0000305" key="17">
    <source>
    </source>
</evidence>
<evidence type="ECO:0000305" key="18">
    <source>
    </source>
</evidence>
<evidence type="ECO:0000305" key="19">
    <source>
    </source>
</evidence>
<evidence type="ECO:0007744" key="20">
    <source>
        <dbReference type="PDB" id="1MXC"/>
    </source>
</evidence>
<evidence type="ECO:0007744" key="21">
    <source>
        <dbReference type="PDB" id="1P7L"/>
    </source>
</evidence>
<evidence type="ECO:0007744" key="22">
    <source>
        <dbReference type="PDB" id="1RG9"/>
    </source>
</evidence>
<evidence type="ECO:0007829" key="23">
    <source>
        <dbReference type="PDB" id="1FUG"/>
    </source>
</evidence>
<evidence type="ECO:0007829" key="24">
    <source>
        <dbReference type="PDB" id="1MXA"/>
    </source>
</evidence>
<evidence type="ECO:0007829" key="25">
    <source>
        <dbReference type="PDB" id="1P7L"/>
    </source>
</evidence>
<evidence type="ECO:0007829" key="26">
    <source>
        <dbReference type="PDB" id="7R2W"/>
    </source>
</evidence>
<evidence type="ECO:0007829" key="27">
    <source>
        <dbReference type="PDB" id="8P4O"/>
    </source>
</evidence>
<reference key="1">
    <citation type="journal article" date="1984" name="J. Biol. Chem.">
        <title>The sequence of metK, the structural gene for S-adenosylmethionine synthetase in Escherichia coli.</title>
        <authorList>
            <person name="Markham G.D."/>
            <person name="Deparasis J."/>
            <person name="Gatmaitan J."/>
        </authorList>
    </citation>
    <scope>NUCLEOTIDE SEQUENCE [GENOMIC DNA]</scope>
</reference>
<reference key="2">
    <citation type="journal article" date="1993" name="Mol. Microbiol.">
        <title>Isozymes of S-adenosylmethionine synthetase are encoded by tandemly duplicated genes in Escherichia coli.</title>
        <authorList>
            <person name="Satishchandran C."/>
            <person name="Taylor J.C."/>
            <person name="Markham G.D."/>
        </authorList>
    </citation>
    <scope>NUCLEOTIDE SEQUENCE [GENOMIC DNA]</scope>
    <scope>DISRUPTION PHENOTYPE</scope>
    <source>
        <strain>K12</strain>
    </source>
</reference>
<reference key="3">
    <citation type="journal article" date="1997" name="Science">
        <title>The complete genome sequence of Escherichia coli K-12.</title>
        <authorList>
            <person name="Blattner F.R."/>
            <person name="Plunkett G. III"/>
            <person name="Bloch C.A."/>
            <person name="Perna N.T."/>
            <person name="Burland V."/>
            <person name="Riley M."/>
            <person name="Collado-Vides J."/>
            <person name="Glasner J.D."/>
            <person name="Rode C.K."/>
            <person name="Mayhew G.F."/>
            <person name="Gregor J."/>
            <person name="Davis N.W."/>
            <person name="Kirkpatrick H.A."/>
            <person name="Goeden M.A."/>
            <person name="Rose D.J."/>
            <person name="Mau B."/>
            <person name="Shao Y."/>
        </authorList>
    </citation>
    <scope>NUCLEOTIDE SEQUENCE [LARGE SCALE GENOMIC DNA]</scope>
    <source>
        <strain>K12 / MG1655 / ATCC 47076</strain>
    </source>
</reference>
<reference key="4">
    <citation type="journal article" date="2006" name="Mol. Syst. Biol.">
        <title>Highly accurate genome sequences of Escherichia coli K-12 strains MG1655 and W3110.</title>
        <authorList>
            <person name="Hayashi K."/>
            <person name="Morooka N."/>
            <person name="Yamamoto Y."/>
            <person name="Fujita K."/>
            <person name="Isono K."/>
            <person name="Choi S."/>
            <person name="Ohtsubo E."/>
            <person name="Baba T."/>
            <person name="Wanner B.L."/>
            <person name="Mori H."/>
            <person name="Horiuchi T."/>
        </authorList>
    </citation>
    <scope>NUCLEOTIDE SEQUENCE [LARGE SCALE GENOMIC DNA]</scope>
    <source>
        <strain>K12 / W3110 / ATCC 27325 / DSM 5911</strain>
    </source>
</reference>
<reference key="5">
    <citation type="journal article" date="1990" name="J. Bacteriol.">
        <title>Nucleotide sequence and analysis of the speA gene encoding biosynthetic arginine decarboxylase in Escherichia coli.</title>
        <authorList>
            <person name="Moore R.C."/>
            <person name="Boyle S.M."/>
        </authorList>
    </citation>
    <scope>NUCLEOTIDE SEQUENCE [GENOMIC DNA] OF 1-63</scope>
</reference>
<reference key="6">
    <citation type="journal article" date="1980" name="J. Biol. Chem.">
        <title>S-Adenosylmethionine synthetase from Escherichia coli.</title>
        <authorList>
            <person name="Markham G.D."/>
            <person name="Hafner E.W."/>
            <person name="Tabor C.W."/>
            <person name="Tabor H."/>
        </authorList>
    </citation>
    <scope>FUNCTION</scope>
    <scope>CATALYTIC ACTIVITY</scope>
    <scope>COFACTOR</scope>
    <scope>PATHWAY</scope>
    <scope>SUBUNIT</scope>
</reference>
<reference key="7">
    <citation type="journal article" date="1995" name="J. Biol. Chem.">
        <title>Investigation of monovalent cation activation of S-adenosylmethionine synthetase using mutagenesis and uranyl inhibition.</title>
        <authorList>
            <person name="McQueney M.S."/>
            <person name="Markham G.D."/>
        </authorList>
    </citation>
    <scope>FUNCTION</scope>
    <scope>CATALYTIC ACTIVITY</scope>
    <scope>COFACTOR</scope>
    <scope>PATHWAY</scope>
    <scope>BIOPHYSICOCHEMICAL PROPERTIES</scope>
    <scope>MUTAGENESIS OF GLU-43</scope>
</reference>
<reference key="8">
    <citation type="journal article" date="1995" name="J. Biol. Chem.">
        <title>Structural and functional roles of cysteine 90 and cysteine 240 in S-adenosylmethionine synthetase.</title>
        <authorList>
            <person name="Reczkowski R.S."/>
            <person name="Markham G.D."/>
        </authorList>
    </citation>
    <scope>FUNCTION</scope>
    <scope>CATALYTIC ACTIVITY</scope>
    <scope>SUBUNIT</scope>
    <scope>PATHWAY</scope>
    <scope>MUTAGENESIS OF CYS-90 AND CYS-240</scope>
    <source>
        <strain>B</strain>
        <strain>K12</strain>
    </source>
</reference>
<reference key="9">
    <citation type="journal article" date="1997" name="Electrophoresis">
        <title>Escherichia coli proteome analysis using the gene-protein database.</title>
        <authorList>
            <person name="VanBogelen R.A."/>
            <person name="Abshire K.Z."/>
            <person name="Moldover B."/>
            <person name="Olson E.R."/>
            <person name="Neidhardt F.C."/>
        </authorList>
    </citation>
    <scope>IDENTIFICATION BY 2D-GEL</scope>
</reference>
<reference key="10">
    <citation type="journal article" date="1998" name="Biochemistry">
        <title>The active-site arginine of S-adenosylmethionine synthetase orients the reaction intermediate.</title>
        <authorList>
            <person name="Reczkowski R.S."/>
            <person name="Taylor J.C."/>
            <person name="Markham G.D."/>
        </authorList>
    </citation>
    <scope>FUNCTION</scope>
    <scope>CATALYTIC ACTIVITY</scope>
    <scope>PATHWAY</scope>
    <scope>MUTAGENESIS OF ARG-245</scope>
    <source>
        <strain>B</strain>
        <strain>K12</strain>
    </source>
</reference>
<reference key="11">
    <citation type="journal article" date="1999" name="J. Biol. Chem.">
        <title>The bifunctional active site of S-adenosylmethionine synthetase. Roles of the active site aspartates.</title>
        <authorList>
            <person name="Taylor J.C."/>
            <person name="Markham G.D."/>
        </authorList>
    </citation>
    <scope>FUNCTION</scope>
    <scope>CATALYTIC ACTIVITY</scope>
    <scope>PATHWAY</scope>
    <scope>MUTAGENESIS OF ASP-17; ASP-119; ASP-239 AND ASP-272</scope>
    <scope>COFACTOR</scope>
    <source>
        <strain>B</strain>
        <strain>K12</strain>
    </source>
</reference>
<reference key="12">
    <citation type="journal article" date="2000" name="J. Biol. Chem.">
        <title>The bifunctional active site of S-adenosylmethionine synthetase. Roles of the basic residues.</title>
        <authorList>
            <person name="Taylor J.C."/>
            <person name="Markham G.D."/>
        </authorList>
    </citation>
    <scope>FUNCTION</scope>
    <scope>CATALYTIC ACTIVITY</scope>
    <scope>PATHWAY</scope>
    <scope>SUBUNIT</scope>
    <scope>MUTAGENESIS OF HIS-15; LYS-166; LYS-246; LYS-266 AND LYS-270</scope>
    <source>
        <strain>B</strain>
        <strain>K12</strain>
    </source>
</reference>
<reference key="13">
    <citation type="journal article" date="2002" name="Mol. Microbiol.">
        <title>Studies on the role of the metK gene product of Escherichia coli K-12.</title>
        <authorList>
            <person name="Wei Y."/>
            <person name="Newman E.B."/>
        </authorList>
    </citation>
    <scope>TRANSCRIPTIONAL START SITE</scope>
    <scope>ESSENTIAL GENE</scope>
</reference>
<reference key="14">
    <citation type="journal article" date="2009" name="Mol. Cell. Proteomics">
        <title>Lysine acetylation is a highly abundant and evolutionarily conserved modification in Escherichia coli.</title>
        <authorList>
            <person name="Zhang J."/>
            <person name="Sprung R."/>
            <person name="Pei J."/>
            <person name="Tan X."/>
            <person name="Kim S."/>
            <person name="Zhu H."/>
            <person name="Liu C.F."/>
            <person name="Grishin N.V."/>
            <person name="Zhao Y."/>
        </authorList>
    </citation>
    <scope>ACETYLATION [LARGE SCALE ANALYSIS] AT LYS-3</scope>
    <scope>IDENTIFICATION BY MASS SPECTROMETRY</scope>
    <source>
        <strain>K12 / JW1106</strain>
        <strain>K12 / MG1655 / ATCC 47076</strain>
    </source>
</reference>
<reference key="15">
    <citation type="journal article" date="2021" name="MBio">
        <title>SAMase of Bacteriophage T3 Inactivates Escherichia coli's Methionine S-Adenosyltransferase by Forming Heteropolymers.</title>
        <authorList>
            <person name="Simon-Baram H."/>
            <person name="Kleiner D."/>
            <person name="Shmulevich F."/>
            <person name="Zarivach R."/>
            <person name="Zalk R."/>
            <person name="Tang H."/>
            <person name="Ding F."/>
            <person name="Bershtein S."/>
        </authorList>
    </citation>
    <scope>INTERACTION WITH ENTEROBACTERIA PHAGE T3 S-ADENOSYLMETHIONINE LYASE (MICROBIAL INFECTION)</scope>
</reference>
<reference key="16">
    <citation type="journal article" date="1996" name="J. Biol. Chem.">
        <title>Crystal structure of S-adenosylmethionine synthetase.</title>
        <authorList>
            <person name="Takusagawa F."/>
            <person name="Kamitori S."/>
            <person name="Misaki S."/>
            <person name="Markham G.D."/>
        </authorList>
    </citation>
    <scope>X-RAY CRYSTALLOGRAPHY (3.0 ANGSTROMS) IN COMPLEX WITH MAGNESIUM AND POTASSIUM</scope>
    <scope>SUBUNIT</scope>
    <scope>COFACTOR</scope>
    <scope>MASS SPECTROMETRY</scope>
</reference>
<reference key="17">
    <citation type="journal article" date="1996" name="Biochemistry">
        <title>Structure and function of S-adenosylmethionine synthetase: crystal structures of S-adenosylmethionine synthetase with ADP, BrADP, and PPi at 2.8-A resolution.</title>
        <authorList>
            <person name="Takusagawa F."/>
            <person name="Kamitori S."/>
            <person name="Markham G.D."/>
        </authorList>
    </citation>
    <scope>X-RAY CRYSTALLOGRAPHY (2.8 ANGSTROMS) IN COMPLEXES WITH ATP ANALOGS; MAGNESIUM AND POTASSIUM</scope>
    <scope>SUBUNIT</scope>
    <scope>COFACTOR</scope>
</reference>
<reference key="18">
    <citation type="journal article" date="1996" name="J. Biomol. Struct. Dyn.">
        <title>Flexible loop in the structure of S-adenosylmethionine synthetase crystallized in the tetragonal modification.</title>
        <authorList>
            <person name="Fu Z."/>
            <person name="Hu Y."/>
            <person name="Markham G.D."/>
            <person name="Takusagawa F."/>
        </authorList>
    </citation>
    <scope>X-RAY CRYSTALLOGRAPHY (3.2 ANGSTROMS)</scope>
    <scope>SUBUNIT</scope>
</reference>
<reference key="19">
    <citation type="journal article" date="2004" name="Biochemistry">
        <title>Crystal structure of the S-adenosylmethionine synthetase ternary complex: a novel catalytic mechanism of S-adenosylmethionine synthesis from ATP and Met.</title>
        <authorList>
            <person name="Komoto J."/>
            <person name="Yamada T."/>
            <person name="Takata Y."/>
            <person name="Markham G.D."/>
            <person name="Takusagawa F."/>
        </authorList>
    </citation>
    <scope>X-RAY CRYSTALLOGRAPHY (2.50 ANGSTROMS) IN COMPLEXES WITH ATP ANALOG; L-METHIONINE; POTASSIUM AND MAGNESIUM</scope>
    <scope>SUBUNIT</scope>
    <scope>COFACTOR</scope>
</reference>
<gene>
    <name evidence="1" type="primary">metK</name>
    <name type="synonym">metX</name>
    <name type="ordered locus">b2942</name>
    <name type="ordered locus">JW2909</name>
</gene>